<organism>
    <name type="scientific">Nitrosococcus oceani (strain ATCC 19707 / BCRC 17464 / JCM 30415 / NCIMB 11848 / C-107)</name>
    <dbReference type="NCBI Taxonomy" id="323261"/>
    <lineage>
        <taxon>Bacteria</taxon>
        <taxon>Pseudomonadati</taxon>
        <taxon>Pseudomonadota</taxon>
        <taxon>Gammaproteobacteria</taxon>
        <taxon>Chromatiales</taxon>
        <taxon>Chromatiaceae</taxon>
        <taxon>Nitrosococcus</taxon>
    </lineage>
</organism>
<gene>
    <name evidence="1" type="primary">nadK</name>
    <name type="ordered locus">Noc_1190</name>
</gene>
<comment type="function">
    <text evidence="1">Involved in the regulation of the intracellular balance of NAD and NADP, and is a key enzyme in the biosynthesis of NADP. Catalyzes specifically the phosphorylation on 2'-hydroxyl of the adenosine moiety of NAD to yield NADP.</text>
</comment>
<comment type="catalytic activity">
    <reaction evidence="1">
        <text>NAD(+) + ATP = ADP + NADP(+) + H(+)</text>
        <dbReference type="Rhea" id="RHEA:18629"/>
        <dbReference type="ChEBI" id="CHEBI:15378"/>
        <dbReference type="ChEBI" id="CHEBI:30616"/>
        <dbReference type="ChEBI" id="CHEBI:57540"/>
        <dbReference type="ChEBI" id="CHEBI:58349"/>
        <dbReference type="ChEBI" id="CHEBI:456216"/>
        <dbReference type="EC" id="2.7.1.23"/>
    </reaction>
</comment>
<comment type="cofactor">
    <cofactor evidence="1">
        <name>a divalent metal cation</name>
        <dbReference type="ChEBI" id="CHEBI:60240"/>
    </cofactor>
</comment>
<comment type="subcellular location">
    <subcellularLocation>
        <location evidence="1">Cytoplasm</location>
    </subcellularLocation>
</comment>
<comment type="similarity">
    <text evidence="1">Belongs to the NAD kinase family.</text>
</comment>
<sequence>MAKPFKIIGLIGKQKDPRIAESLQQVADFLVAKGLTLMIDQETAALFPSHHWEAVTRHELGQRCDLAIVVGGDGTLLHVARSLADSGIPLLGIKLGRLGFLADVLPEALGTDLAAMLAGHYREEERFLLQAELEQESQSYLIGTALNDITTHIREVVRLIEFETYINGRFLNSQRSDGLVVATPTGSTAYALSAGGPILDVNLNAMVLVSICPHALSNRPLVIDADSLVEIVISEYNTTPGQVSCDGQPGIALKVGDKVKIYKRPGRVRLIHPTAHDHYSILRAKLHWGRKLG</sequence>
<reference key="1">
    <citation type="journal article" date="2006" name="Appl. Environ. Microbiol.">
        <title>Complete genome sequence of the marine, chemolithoautotrophic, ammonia-oxidizing bacterium Nitrosococcus oceani ATCC 19707.</title>
        <authorList>
            <person name="Klotz M.G."/>
            <person name="Arp D.J."/>
            <person name="Chain P.S.G."/>
            <person name="El-Sheikh A.F."/>
            <person name="Hauser L.J."/>
            <person name="Hommes N.G."/>
            <person name="Larimer F.W."/>
            <person name="Malfatti S.A."/>
            <person name="Norton J.M."/>
            <person name="Poret-Peterson A.T."/>
            <person name="Vergez L.M."/>
            <person name="Ward B.B."/>
        </authorList>
    </citation>
    <scope>NUCLEOTIDE SEQUENCE [LARGE SCALE GENOMIC DNA]</scope>
    <source>
        <strain>ATCC 19707 / BCRC 17464 / JCM 30415 / NCIMB 11848 / C-107</strain>
    </source>
</reference>
<accession>Q3JBV4</accession>
<feature type="chain" id="PRO_0000229658" description="NAD kinase">
    <location>
        <begin position="1"/>
        <end position="293"/>
    </location>
</feature>
<feature type="active site" description="Proton acceptor" evidence="1">
    <location>
        <position position="73"/>
    </location>
</feature>
<feature type="binding site" evidence="1">
    <location>
        <begin position="73"/>
        <end position="74"/>
    </location>
    <ligand>
        <name>NAD(+)</name>
        <dbReference type="ChEBI" id="CHEBI:57540"/>
    </ligand>
</feature>
<feature type="binding site" evidence="1">
    <location>
        <position position="78"/>
    </location>
    <ligand>
        <name>NAD(+)</name>
        <dbReference type="ChEBI" id="CHEBI:57540"/>
    </ligand>
</feature>
<feature type="binding site" evidence="1">
    <location>
        <begin position="147"/>
        <end position="148"/>
    </location>
    <ligand>
        <name>NAD(+)</name>
        <dbReference type="ChEBI" id="CHEBI:57540"/>
    </ligand>
</feature>
<feature type="binding site" evidence="1">
    <location>
        <position position="158"/>
    </location>
    <ligand>
        <name>NAD(+)</name>
        <dbReference type="ChEBI" id="CHEBI:57540"/>
    </ligand>
</feature>
<feature type="binding site" evidence="1">
    <location>
        <position position="175"/>
    </location>
    <ligand>
        <name>NAD(+)</name>
        <dbReference type="ChEBI" id="CHEBI:57540"/>
    </ligand>
</feature>
<feature type="binding site" evidence="1">
    <location>
        <position position="177"/>
    </location>
    <ligand>
        <name>NAD(+)</name>
        <dbReference type="ChEBI" id="CHEBI:57540"/>
    </ligand>
</feature>
<feature type="binding site" evidence="1">
    <location>
        <begin position="188"/>
        <end position="193"/>
    </location>
    <ligand>
        <name>NAD(+)</name>
        <dbReference type="ChEBI" id="CHEBI:57540"/>
    </ligand>
</feature>
<feature type="binding site" evidence="1">
    <location>
        <position position="248"/>
    </location>
    <ligand>
        <name>NAD(+)</name>
        <dbReference type="ChEBI" id="CHEBI:57540"/>
    </ligand>
</feature>
<proteinExistence type="inferred from homology"/>
<keyword id="KW-0067">ATP-binding</keyword>
<keyword id="KW-0963">Cytoplasm</keyword>
<keyword id="KW-0418">Kinase</keyword>
<keyword id="KW-0520">NAD</keyword>
<keyword id="KW-0521">NADP</keyword>
<keyword id="KW-0547">Nucleotide-binding</keyword>
<keyword id="KW-1185">Reference proteome</keyword>
<keyword id="KW-0808">Transferase</keyword>
<name>NADK_NITOC</name>
<dbReference type="EC" id="2.7.1.23" evidence="1"/>
<dbReference type="EMBL" id="CP000127">
    <property type="protein sequence ID" value="ABA57692.1"/>
    <property type="molecule type" value="Genomic_DNA"/>
</dbReference>
<dbReference type="RefSeq" id="WP_002810151.1">
    <property type="nucleotide sequence ID" value="NC_007484.1"/>
</dbReference>
<dbReference type="SMR" id="Q3JBV4"/>
<dbReference type="FunCoup" id="Q3JBV4">
    <property type="interactions" value="545"/>
</dbReference>
<dbReference type="STRING" id="323261.Noc_1190"/>
<dbReference type="KEGG" id="noc:Noc_1190"/>
<dbReference type="eggNOG" id="COG0061">
    <property type="taxonomic scope" value="Bacteria"/>
</dbReference>
<dbReference type="HOGENOM" id="CLU_008831_0_1_6"/>
<dbReference type="InParanoid" id="Q3JBV4"/>
<dbReference type="Proteomes" id="UP000006838">
    <property type="component" value="Chromosome"/>
</dbReference>
<dbReference type="GO" id="GO:0005737">
    <property type="term" value="C:cytoplasm"/>
    <property type="evidence" value="ECO:0007669"/>
    <property type="project" value="UniProtKB-SubCell"/>
</dbReference>
<dbReference type="GO" id="GO:0005524">
    <property type="term" value="F:ATP binding"/>
    <property type="evidence" value="ECO:0007669"/>
    <property type="project" value="UniProtKB-KW"/>
</dbReference>
<dbReference type="GO" id="GO:0046872">
    <property type="term" value="F:metal ion binding"/>
    <property type="evidence" value="ECO:0007669"/>
    <property type="project" value="UniProtKB-UniRule"/>
</dbReference>
<dbReference type="GO" id="GO:0051287">
    <property type="term" value="F:NAD binding"/>
    <property type="evidence" value="ECO:0007669"/>
    <property type="project" value="UniProtKB-ARBA"/>
</dbReference>
<dbReference type="GO" id="GO:0003951">
    <property type="term" value="F:NAD+ kinase activity"/>
    <property type="evidence" value="ECO:0007669"/>
    <property type="project" value="UniProtKB-UniRule"/>
</dbReference>
<dbReference type="GO" id="GO:0019674">
    <property type="term" value="P:NAD metabolic process"/>
    <property type="evidence" value="ECO:0007669"/>
    <property type="project" value="InterPro"/>
</dbReference>
<dbReference type="GO" id="GO:0006741">
    <property type="term" value="P:NADP biosynthetic process"/>
    <property type="evidence" value="ECO:0007669"/>
    <property type="project" value="UniProtKB-UniRule"/>
</dbReference>
<dbReference type="Gene3D" id="3.40.50.10330">
    <property type="entry name" value="Probable inorganic polyphosphate/atp-NAD kinase, domain 1"/>
    <property type="match status" value="1"/>
</dbReference>
<dbReference type="Gene3D" id="2.60.200.30">
    <property type="entry name" value="Probable inorganic polyphosphate/atp-NAD kinase, domain 2"/>
    <property type="match status" value="1"/>
</dbReference>
<dbReference type="HAMAP" id="MF_00361">
    <property type="entry name" value="NAD_kinase"/>
    <property type="match status" value="1"/>
</dbReference>
<dbReference type="InterPro" id="IPR017438">
    <property type="entry name" value="ATP-NAD_kinase_N"/>
</dbReference>
<dbReference type="InterPro" id="IPR017437">
    <property type="entry name" value="ATP-NAD_kinase_PpnK-typ_C"/>
</dbReference>
<dbReference type="InterPro" id="IPR016064">
    <property type="entry name" value="NAD/diacylglycerol_kinase_sf"/>
</dbReference>
<dbReference type="InterPro" id="IPR002504">
    <property type="entry name" value="NADK"/>
</dbReference>
<dbReference type="NCBIfam" id="NF002306">
    <property type="entry name" value="PRK01231.1"/>
    <property type="match status" value="1"/>
</dbReference>
<dbReference type="PANTHER" id="PTHR20275">
    <property type="entry name" value="NAD KINASE"/>
    <property type="match status" value="1"/>
</dbReference>
<dbReference type="PANTHER" id="PTHR20275:SF0">
    <property type="entry name" value="NAD KINASE"/>
    <property type="match status" value="1"/>
</dbReference>
<dbReference type="Pfam" id="PF01513">
    <property type="entry name" value="NAD_kinase"/>
    <property type="match status" value="1"/>
</dbReference>
<dbReference type="Pfam" id="PF20143">
    <property type="entry name" value="NAD_kinase_C"/>
    <property type="match status" value="1"/>
</dbReference>
<dbReference type="SUPFAM" id="SSF111331">
    <property type="entry name" value="NAD kinase/diacylglycerol kinase-like"/>
    <property type="match status" value="1"/>
</dbReference>
<protein>
    <recommendedName>
        <fullName evidence="1">NAD kinase</fullName>
        <ecNumber evidence="1">2.7.1.23</ecNumber>
    </recommendedName>
    <alternativeName>
        <fullName evidence="1">ATP-dependent NAD kinase</fullName>
    </alternativeName>
</protein>
<evidence type="ECO:0000255" key="1">
    <source>
        <dbReference type="HAMAP-Rule" id="MF_00361"/>
    </source>
</evidence>